<dbReference type="EC" id="2.7.8.26" evidence="1"/>
<dbReference type="EMBL" id="CP000633">
    <property type="protein sequence ID" value="ACM36436.1"/>
    <property type="molecule type" value="Genomic_DNA"/>
</dbReference>
<dbReference type="RefSeq" id="WP_015915857.1">
    <property type="nucleotide sequence ID" value="NC_011989.1"/>
</dbReference>
<dbReference type="STRING" id="311402.Avi_2016"/>
<dbReference type="KEGG" id="avi:Avi_2016"/>
<dbReference type="eggNOG" id="COG0368">
    <property type="taxonomic scope" value="Bacteria"/>
</dbReference>
<dbReference type="HOGENOM" id="CLU_057426_1_0_5"/>
<dbReference type="UniPathway" id="UPA00148">
    <property type="reaction ID" value="UER00238"/>
</dbReference>
<dbReference type="Proteomes" id="UP000001596">
    <property type="component" value="Chromosome 1"/>
</dbReference>
<dbReference type="GO" id="GO:0005886">
    <property type="term" value="C:plasma membrane"/>
    <property type="evidence" value="ECO:0007669"/>
    <property type="project" value="UniProtKB-SubCell"/>
</dbReference>
<dbReference type="GO" id="GO:0051073">
    <property type="term" value="F:adenosylcobinamide-GDP ribazoletransferase activity"/>
    <property type="evidence" value="ECO:0007669"/>
    <property type="project" value="UniProtKB-UniRule"/>
</dbReference>
<dbReference type="GO" id="GO:0008818">
    <property type="term" value="F:cobalamin 5'-phosphate synthase activity"/>
    <property type="evidence" value="ECO:0007669"/>
    <property type="project" value="UniProtKB-UniRule"/>
</dbReference>
<dbReference type="GO" id="GO:0009236">
    <property type="term" value="P:cobalamin biosynthetic process"/>
    <property type="evidence" value="ECO:0007669"/>
    <property type="project" value="UniProtKB-UniRule"/>
</dbReference>
<dbReference type="HAMAP" id="MF_00719">
    <property type="entry name" value="CobS"/>
    <property type="match status" value="1"/>
</dbReference>
<dbReference type="InterPro" id="IPR003805">
    <property type="entry name" value="CobS"/>
</dbReference>
<dbReference type="NCBIfam" id="NF001276">
    <property type="entry name" value="PRK00235.1-2"/>
    <property type="match status" value="1"/>
</dbReference>
<dbReference type="PANTHER" id="PTHR34148">
    <property type="entry name" value="ADENOSYLCOBINAMIDE-GDP RIBAZOLETRANSFERASE"/>
    <property type="match status" value="1"/>
</dbReference>
<dbReference type="PANTHER" id="PTHR34148:SF1">
    <property type="entry name" value="ADENOSYLCOBINAMIDE-GDP RIBAZOLETRANSFERASE"/>
    <property type="match status" value="1"/>
</dbReference>
<dbReference type="Pfam" id="PF02654">
    <property type="entry name" value="CobS"/>
    <property type="match status" value="1"/>
</dbReference>
<comment type="function">
    <text evidence="1">Joins adenosylcobinamide-GDP and alpha-ribazole to generate adenosylcobalamin (Ado-cobalamin). Also synthesizes adenosylcobalamin 5'-phosphate from adenosylcobinamide-GDP and alpha-ribazole 5'-phosphate.</text>
</comment>
<comment type="catalytic activity">
    <reaction evidence="1">
        <text>alpha-ribazole + adenosylcob(III)inamide-GDP = adenosylcob(III)alamin + GMP + H(+)</text>
        <dbReference type="Rhea" id="RHEA:16049"/>
        <dbReference type="ChEBI" id="CHEBI:10329"/>
        <dbReference type="ChEBI" id="CHEBI:15378"/>
        <dbReference type="ChEBI" id="CHEBI:18408"/>
        <dbReference type="ChEBI" id="CHEBI:58115"/>
        <dbReference type="ChEBI" id="CHEBI:60487"/>
        <dbReference type="EC" id="2.7.8.26"/>
    </reaction>
</comment>
<comment type="catalytic activity">
    <reaction evidence="1">
        <text>alpha-ribazole 5'-phosphate + adenosylcob(III)inamide-GDP = adenosylcob(III)alamin 5'-phosphate + GMP + H(+)</text>
        <dbReference type="Rhea" id="RHEA:23560"/>
        <dbReference type="ChEBI" id="CHEBI:15378"/>
        <dbReference type="ChEBI" id="CHEBI:57918"/>
        <dbReference type="ChEBI" id="CHEBI:58115"/>
        <dbReference type="ChEBI" id="CHEBI:60487"/>
        <dbReference type="ChEBI" id="CHEBI:60493"/>
        <dbReference type="EC" id="2.7.8.26"/>
    </reaction>
</comment>
<comment type="cofactor">
    <cofactor evidence="1">
        <name>Mg(2+)</name>
        <dbReference type="ChEBI" id="CHEBI:18420"/>
    </cofactor>
</comment>
<comment type="pathway">
    <text evidence="1">Cofactor biosynthesis; adenosylcobalamin biosynthesis; adenosylcobalamin from cob(II)yrinate a,c-diamide: step 7/7.</text>
</comment>
<comment type="subcellular location">
    <subcellularLocation>
        <location evidence="1">Cell inner membrane</location>
        <topology evidence="1">Multi-pass membrane protein</topology>
    </subcellularLocation>
</comment>
<comment type="similarity">
    <text evidence="1">Belongs to the CobS family.</text>
</comment>
<gene>
    <name evidence="1" type="primary">cobS</name>
    <name type="ordered locus">Avi_2016</name>
</gene>
<accession>B9JW08</accession>
<organism>
    <name type="scientific">Allorhizobium ampelinum (strain ATCC BAA-846 / DSM 112012 / S4)</name>
    <name type="common">Agrobacterium vitis (strain S4)</name>
    <dbReference type="NCBI Taxonomy" id="311402"/>
    <lineage>
        <taxon>Bacteria</taxon>
        <taxon>Pseudomonadati</taxon>
        <taxon>Pseudomonadota</taxon>
        <taxon>Alphaproteobacteria</taxon>
        <taxon>Hyphomicrobiales</taxon>
        <taxon>Rhizobiaceae</taxon>
        <taxon>Rhizobium/Agrobacterium group</taxon>
        <taxon>Allorhizobium</taxon>
        <taxon>Allorhizobium ampelinum</taxon>
    </lineage>
</organism>
<reference key="1">
    <citation type="journal article" date="2009" name="J. Bacteriol.">
        <title>Genome sequences of three Agrobacterium biovars help elucidate the evolution of multichromosome genomes in bacteria.</title>
        <authorList>
            <person name="Slater S.C."/>
            <person name="Goldman B.S."/>
            <person name="Goodner B."/>
            <person name="Setubal J.C."/>
            <person name="Farrand S.K."/>
            <person name="Nester E.W."/>
            <person name="Burr T.J."/>
            <person name="Banta L."/>
            <person name="Dickerman A.W."/>
            <person name="Paulsen I."/>
            <person name="Otten L."/>
            <person name="Suen G."/>
            <person name="Welch R."/>
            <person name="Almeida N.F."/>
            <person name="Arnold F."/>
            <person name="Burton O.T."/>
            <person name="Du Z."/>
            <person name="Ewing A."/>
            <person name="Godsy E."/>
            <person name="Heisel S."/>
            <person name="Houmiel K.L."/>
            <person name="Jhaveri J."/>
            <person name="Lu J."/>
            <person name="Miller N.M."/>
            <person name="Norton S."/>
            <person name="Chen Q."/>
            <person name="Phoolcharoen W."/>
            <person name="Ohlin V."/>
            <person name="Ondrusek D."/>
            <person name="Pride N."/>
            <person name="Stricklin S.L."/>
            <person name="Sun J."/>
            <person name="Wheeler C."/>
            <person name="Wilson L."/>
            <person name="Zhu H."/>
            <person name="Wood D.W."/>
        </authorList>
    </citation>
    <scope>NUCLEOTIDE SEQUENCE [LARGE SCALE GENOMIC DNA]</scope>
    <source>
        <strain>ATCC BAA-846 / DSM 112012 / S4</strain>
    </source>
</reference>
<evidence type="ECO:0000255" key="1">
    <source>
        <dbReference type="HAMAP-Rule" id="MF_00719"/>
    </source>
</evidence>
<sequence>MTLTAFVDDLARSLGFLSRLPIASRFFQNHSGEMSRTPRAFPLAGAVITAPAGLLLALMLGLGASSMVAAFAAIGLQVLLTGALHEDGFADTADGLGGANRERALDIMKDSRVGTFGVLALVFGVGLRVAALASLVNSLSPINVALVMIGIAAVSRALMVWHWHALPPAKPDGVAASLGKPEDNTLYTALFLGLAVAVVTIAPVTSFHPLAVMLVASGAAAFASNRLVSHRLGGQTGDTIGATQQICEITALASIAMAL</sequence>
<feature type="chain" id="PRO_1000148016" description="Adenosylcobinamide-GDP ribazoletransferase">
    <location>
        <begin position="1"/>
        <end position="259"/>
    </location>
</feature>
<feature type="transmembrane region" description="Helical" evidence="1">
    <location>
        <begin position="43"/>
        <end position="63"/>
    </location>
</feature>
<feature type="transmembrane region" description="Helical" evidence="1">
    <location>
        <begin position="64"/>
        <end position="84"/>
    </location>
</feature>
<feature type="transmembrane region" description="Helical" evidence="1">
    <location>
        <begin position="116"/>
        <end position="136"/>
    </location>
</feature>
<feature type="transmembrane region" description="Helical" evidence="1">
    <location>
        <begin position="141"/>
        <end position="161"/>
    </location>
</feature>
<feature type="transmembrane region" description="Helical" evidence="1">
    <location>
        <begin position="185"/>
        <end position="205"/>
    </location>
</feature>
<name>COBS_ALLAM</name>
<proteinExistence type="inferred from homology"/>
<protein>
    <recommendedName>
        <fullName evidence="1">Adenosylcobinamide-GDP ribazoletransferase</fullName>
        <ecNumber evidence="1">2.7.8.26</ecNumber>
    </recommendedName>
    <alternativeName>
        <fullName evidence="1">Cobalamin synthase</fullName>
    </alternativeName>
    <alternativeName>
        <fullName evidence="1">Cobalamin-5'-phosphate synthase</fullName>
    </alternativeName>
</protein>
<keyword id="KW-0997">Cell inner membrane</keyword>
<keyword id="KW-1003">Cell membrane</keyword>
<keyword id="KW-0169">Cobalamin biosynthesis</keyword>
<keyword id="KW-0460">Magnesium</keyword>
<keyword id="KW-0472">Membrane</keyword>
<keyword id="KW-1185">Reference proteome</keyword>
<keyword id="KW-0808">Transferase</keyword>
<keyword id="KW-0812">Transmembrane</keyword>
<keyword id="KW-1133">Transmembrane helix</keyword>